<name>HBB_PANPA</name>
<keyword id="KW-0007">Acetylation</keyword>
<keyword id="KW-0903">Direct protein sequencing</keyword>
<keyword id="KW-0349">Heme</keyword>
<keyword id="KW-0408">Iron</keyword>
<keyword id="KW-0479">Metal-binding</keyword>
<keyword id="KW-0561">Oxygen transport</keyword>
<keyword id="KW-0597">Phosphoprotein</keyword>
<keyword id="KW-1185">Reference proteome</keyword>
<keyword id="KW-0702">S-nitrosylation</keyword>
<keyword id="KW-0813">Transport</keyword>
<organism>
    <name type="scientific">Pan paniscus</name>
    <name type="common">Pygmy chimpanzee</name>
    <name type="synonym">Bonobo</name>
    <dbReference type="NCBI Taxonomy" id="9597"/>
    <lineage>
        <taxon>Eukaryota</taxon>
        <taxon>Metazoa</taxon>
        <taxon>Chordata</taxon>
        <taxon>Craniata</taxon>
        <taxon>Vertebrata</taxon>
        <taxon>Euteleostomi</taxon>
        <taxon>Mammalia</taxon>
        <taxon>Eutheria</taxon>
        <taxon>Euarchontoglires</taxon>
        <taxon>Primates</taxon>
        <taxon>Haplorrhini</taxon>
        <taxon>Catarrhini</taxon>
        <taxon>Hominidae</taxon>
        <taxon>Pan</taxon>
    </lineage>
</organism>
<gene>
    <name type="primary">HBB</name>
</gene>
<feature type="initiator methionine" description="Removed" evidence="1 4">
    <location>
        <position position="1"/>
    </location>
</feature>
<feature type="chain" id="PRO_0000053056" description="Hemoglobin subunit beta">
    <location>
        <begin position="2"/>
        <end position="147"/>
    </location>
</feature>
<feature type="domain" description="Globin" evidence="3">
    <location>
        <begin position="3"/>
        <end position="147"/>
    </location>
</feature>
<feature type="binding site" description="distal binding residue">
    <location>
        <position position="64"/>
    </location>
    <ligand>
        <name>heme b</name>
        <dbReference type="ChEBI" id="CHEBI:60344"/>
    </ligand>
    <ligandPart>
        <name>Fe</name>
        <dbReference type="ChEBI" id="CHEBI:18248"/>
    </ligandPart>
</feature>
<feature type="binding site" description="proximal binding residue">
    <location>
        <position position="93"/>
    </location>
    <ligand>
        <name>heme b</name>
        <dbReference type="ChEBI" id="CHEBI:60344"/>
    </ligand>
    <ligandPart>
        <name>Fe</name>
        <dbReference type="ChEBI" id="CHEBI:18248"/>
    </ligandPart>
</feature>
<feature type="modified residue" description="N-acetylvaline" evidence="1">
    <location>
        <position position="2"/>
    </location>
</feature>
<feature type="modified residue" description="Phosphothreonine" evidence="2">
    <location>
        <position position="13"/>
    </location>
</feature>
<feature type="modified residue" description="Phosphoserine" evidence="2">
    <location>
        <position position="45"/>
    </location>
</feature>
<feature type="modified residue" description="N6-acetyllysine" evidence="2">
    <location>
        <position position="60"/>
    </location>
</feature>
<feature type="modified residue" description="N6-acetyllysine" evidence="2">
    <location>
        <position position="83"/>
    </location>
</feature>
<feature type="modified residue" description="S-nitrosocysteine" evidence="2">
    <location>
        <position position="94"/>
    </location>
</feature>
<feature type="modified residue" description="N6-acetyllysine" evidence="2">
    <location>
        <position position="145"/>
    </location>
</feature>
<evidence type="ECO:0000250" key="1">
    <source>
        <dbReference type="UniProtKB" id="P02086"/>
    </source>
</evidence>
<evidence type="ECO:0000250" key="2">
    <source>
        <dbReference type="UniProtKB" id="P68871"/>
    </source>
</evidence>
<evidence type="ECO:0000255" key="3">
    <source>
        <dbReference type="PROSITE-ProRule" id="PRU00238"/>
    </source>
</evidence>
<evidence type="ECO:0000269" key="4">
    <source>
    </source>
</evidence>
<proteinExistence type="evidence at protein level"/>
<sequence length="147" mass="15998">MVHLTPEEKSAVTALWGKVNVDEVGGEALGRLLVVYPWTQRFFESFGDLSTPDAVMGNPKVKAHGKKVLGAFSDGLAHLDNLKGTFATLSELHCDKLHVDPENFRLLGNVLVCVLAHHFGKEFTPPVQAAYQKVVAGVANALAHKYH</sequence>
<accession>P68872</accession>
<accession>P02023</accession>
<accession>Q13852</accession>
<accession>Q14481</accession>
<accession>Q14510</accession>
<accession>Q9BX96</accession>
<accession>Q9UCP8</accession>
<accession>Q9UCP9</accession>
<dbReference type="PIR" id="D93303">
    <property type="entry name" value="HBCZP"/>
</dbReference>
<dbReference type="BMRB" id="P68872"/>
<dbReference type="SMR" id="P68872"/>
<dbReference type="STRING" id="9597.ENSPPAP00000004625"/>
<dbReference type="Ensembl" id="ENSPPAT00000021208.1">
    <property type="protein sequence ID" value="ENSPPAP00000004625.1"/>
    <property type="gene ID" value="ENSPPAG00000019351.1"/>
</dbReference>
<dbReference type="GeneID" id="100976465"/>
<dbReference type="KEGG" id="pps:100976465"/>
<dbReference type="eggNOG" id="KOG3378">
    <property type="taxonomic scope" value="Eukaryota"/>
</dbReference>
<dbReference type="GeneTree" id="ENSGT00940000163476"/>
<dbReference type="OMA" id="LWGQIDV"/>
<dbReference type="OrthoDB" id="968at9604"/>
<dbReference type="Proteomes" id="UP000240080">
    <property type="component" value="Chromosome 11"/>
</dbReference>
<dbReference type="Bgee" id="ENSPPAG00000019351">
    <property type="expression patterns" value="Expressed in liver and 6 other cell types or tissues"/>
</dbReference>
<dbReference type="GO" id="GO:0072562">
    <property type="term" value="C:blood microparticle"/>
    <property type="evidence" value="ECO:0007669"/>
    <property type="project" value="TreeGrafter"/>
</dbReference>
<dbReference type="GO" id="GO:0031838">
    <property type="term" value="C:haptoglobin-hemoglobin complex"/>
    <property type="evidence" value="ECO:0007669"/>
    <property type="project" value="Ensembl"/>
</dbReference>
<dbReference type="GO" id="GO:0005833">
    <property type="term" value="C:hemoglobin complex"/>
    <property type="evidence" value="ECO:0007669"/>
    <property type="project" value="Ensembl"/>
</dbReference>
<dbReference type="GO" id="GO:0031720">
    <property type="term" value="F:haptoglobin binding"/>
    <property type="evidence" value="ECO:0007669"/>
    <property type="project" value="Ensembl"/>
</dbReference>
<dbReference type="GO" id="GO:0020037">
    <property type="term" value="F:heme binding"/>
    <property type="evidence" value="ECO:0007669"/>
    <property type="project" value="InterPro"/>
</dbReference>
<dbReference type="GO" id="GO:0031721">
    <property type="term" value="F:hemoglobin alpha binding"/>
    <property type="evidence" value="ECO:0007669"/>
    <property type="project" value="TreeGrafter"/>
</dbReference>
<dbReference type="GO" id="GO:0046872">
    <property type="term" value="F:metal ion binding"/>
    <property type="evidence" value="ECO:0007669"/>
    <property type="project" value="UniProtKB-KW"/>
</dbReference>
<dbReference type="GO" id="GO:0043177">
    <property type="term" value="F:organic acid binding"/>
    <property type="evidence" value="ECO:0007669"/>
    <property type="project" value="TreeGrafter"/>
</dbReference>
<dbReference type="GO" id="GO:0019825">
    <property type="term" value="F:oxygen binding"/>
    <property type="evidence" value="ECO:0007669"/>
    <property type="project" value="Ensembl"/>
</dbReference>
<dbReference type="GO" id="GO:0005344">
    <property type="term" value="F:oxygen carrier activity"/>
    <property type="evidence" value="ECO:0007669"/>
    <property type="project" value="UniProtKB-KW"/>
</dbReference>
<dbReference type="GO" id="GO:0004601">
    <property type="term" value="F:peroxidase activity"/>
    <property type="evidence" value="ECO:0007669"/>
    <property type="project" value="Ensembl"/>
</dbReference>
<dbReference type="GO" id="GO:0042744">
    <property type="term" value="P:hydrogen peroxide catabolic process"/>
    <property type="evidence" value="ECO:0007669"/>
    <property type="project" value="Ensembl"/>
</dbReference>
<dbReference type="GO" id="GO:0030185">
    <property type="term" value="P:nitric oxide transport"/>
    <property type="evidence" value="ECO:0007669"/>
    <property type="project" value="Ensembl"/>
</dbReference>
<dbReference type="GO" id="GO:0070293">
    <property type="term" value="P:renal absorption"/>
    <property type="evidence" value="ECO:0007669"/>
    <property type="project" value="Ensembl"/>
</dbReference>
<dbReference type="GO" id="GO:0042542">
    <property type="term" value="P:response to hydrogen peroxide"/>
    <property type="evidence" value="ECO:0007669"/>
    <property type="project" value="Ensembl"/>
</dbReference>
<dbReference type="CDD" id="cd08925">
    <property type="entry name" value="Hb-beta-like"/>
    <property type="match status" value="1"/>
</dbReference>
<dbReference type="FunFam" id="1.10.490.10:FF:000001">
    <property type="entry name" value="Hemoglobin subunit beta"/>
    <property type="match status" value="1"/>
</dbReference>
<dbReference type="Gene3D" id="1.10.490.10">
    <property type="entry name" value="Globins"/>
    <property type="match status" value="1"/>
</dbReference>
<dbReference type="InterPro" id="IPR000971">
    <property type="entry name" value="Globin"/>
</dbReference>
<dbReference type="InterPro" id="IPR009050">
    <property type="entry name" value="Globin-like_sf"/>
</dbReference>
<dbReference type="InterPro" id="IPR012292">
    <property type="entry name" value="Globin/Proto"/>
</dbReference>
<dbReference type="InterPro" id="IPR002337">
    <property type="entry name" value="Hemoglobin_b"/>
</dbReference>
<dbReference type="InterPro" id="IPR050056">
    <property type="entry name" value="Hemoglobin_oxygen_transport"/>
</dbReference>
<dbReference type="PANTHER" id="PTHR11442">
    <property type="entry name" value="HEMOGLOBIN FAMILY MEMBER"/>
    <property type="match status" value="1"/>
</dbReference>
<dbReference type="PANTHER" id="PTHR11442:SF42">
    <property type="entry name" value="HEMOGLOBIN SUBUNIT BETA"/>
    <property type="match status" value="1"/>
</dbReference>
<dbReference type="Pfam" id="PF00042">
    <property type="entry name" value="Globin"/>
    <property type="match status" value="1"/>
</dbReference>
<dbReference type="PRINTS" id="PR00814">
    <property type="entry name" value="BETAHAEM"/>
</dbReference>
<dbReference type="SUPFAM" id="SSF46458">
    <property type="entry name" value="Globin-like"/>
    <property type="match status" value="1"/>
</dbReference>
<dbReference type="PROSITE" id="PS01033">
    <property type="entry name" value="GLOBIN"/>
    <property type="match status" value="1"/>
</dbReference>
<protein>
    <recommendedName>
        <fullName>Hemoglobin subunit beta</fullName>
    </recommendedName>
    <alternativeName>
        <fullName>Beta-globin</fullName>
    </alternativeName>
    <alternativeName>
        <fullName>Hemoglobin beta chain</fullName>
    </alternativeName>
</protein>
<comment type="function">
    <text>Involved in oxygen transport from the lung to the various peripheral tissues.</text>
</comment>
<comment type="subunit">
    <text>Heterotetramer of two alpha chains and two beta chains in adult hemoglobin A (HbA).</text>
</comment>
<comment type="tissue specificity">
    <text>Red blood cells.</text>
</comment>
<comment type="similarity">
    <text evidence="3">Belongs to the globin family.</text>
</comment>
<reference key="1">
    <citation type="journal article" date="1983" name="Nature">
        <title>Evidence on human origins from haemoglobins of African apes.</title>
        <authorList>
            <person name="Goodman M."/>
            <person name="Braunitzer G."/>
            <person name="Stangl A."/>
            <person name="Schrank B."/>
        </authorList>
    </citation>
    <scope>PROTEIN SEQUENCE OF 2-147</scope>
</reference>